<dbReference type="EMBL" id="AK032094">
    <property type="protein sequence ID" value="BAC27695.1"/>
    <property type="molecule type" value="mRNA"/>
</dbReference>
<dbReference type="EMBL" id="AK155039">
    <property type="protein sequence ID" value="BAE33006.1"/>
    <property type="molecule type" value="mRNA"/>
</dbReference>
<dbReference type="EMBL" id="BC063066">
    <property type="protein sequence ID" value="AAH63066.1"/>
    <property type="molecule type" value="mRNA"/>
</dbReference>
<dbReference type="CCDS" id="CCDS40887.1"/>
<dbReference type="RefSeq" id="NP_001013405.2">
    <property type="nucleotide sequence ID" value="NM_001013387.2"/>
</dbReference>
<dbReference type="RefSeq" id="NP_001104546.1">
    <property type="nucleotide sequence ID" value="NM_001111076.1"/>
</dbReference>
<dbReference type="SMR" id="Q6P560"/>
<dbReference type="BioGRID" id="235342">
    <property type="interactions" value="1"/>
</dbReference>
<dbReference type="STRING" id="10090.ENSMUSP00000110989"/>
<dbReference type="GlyGen" id="Q6P560">
    <property type="glycosylation" value="1 site, 1 O-linked glycan (1 site)"/>
</dbReference>
<dbReference type="iPTMnet" id="Q6P560"/>
<dbReference type="PhosphoSitePlus" id="Q6P560"/>
<dbReference type="PaxDb" id="10090-ENSMUSP00000110989"/>
<dbReference type="ProteomicsDB" id="275002"/>
<dbReference type="DNASU" id="319535"/>
<dbReference type="GeneID" id="319535"/>
<dbReference type="KEGG" id="mmu:319535"/>
<dbReference type="AGR" id="MGI:2442220"/>
<dbReference type="CTD" id="319535"/>
<dbReference type="MGI" id="MGI:2442220">
    <property type="gene designation" value="Zfp182"/>
</dbReference>
<dbReference type="eggNOG" id="KOG1721">
    <property type="taxonomic scope" value="Eukaryota"/>
</dbReference>
<dbReference type="InParanoid" id="Q6P560"/>
<dbReference type="OrthoDB" id="9411774at2759"/>
<dbReference type="PhylomeDB" id="Q6P560"/>
<dbReference type="BioGRID-ORCS" id="319535">
    <property type="hits" value="2 hits in 77 CRISPR screens"/>
</dbReference>
<dbReference type="ChiTaRS" id="Zfp182">
    <property type="organism name" value="mouse"/>
</dbReference>
<dbReference type="PRO" id="PR:Q6P560"/>
<dbReference type="Proteomes" id="UP000000589">
    <property type="component" value="Unplaced"/>
</dbReference>
<dbReference type="RNAct" id="Q6P560">
    <property type="molecule type" value="protein"/>
</dbReference>
<dbReference type="GO" id="GO:0005634">
    <property type="term" value="C:nucleus"/>
    <property type="evidence" value="ECO:0007669"/>
    <property type="project" value="UniProtKB-SubCell"/>
</dbReference>
<dbReference type="GO" id="GO:0003677">
    <property type="term" value="F:DNA binding"/>
    <property type="evidence" value="ECO:0007669"/>
    <property type="project" value="UniProtKB-KW"/>
</dbReference>
<dbReference type="GO" id="GO:0008270">
    <property type="term" value="F:zinc ion binding"/>
    <property type="evidence" value="ECO:0007669"/>
    <property type="project" value="UniProtKB-KW"/>
</dbReference>
<dbReference type="GO" id="GO:0006355">
    <property type="term" value="P:regulation of DNA-templated transcription"/>
    <property type="evidence" value="ECO:0007669"/>
    <property type="project" value="InterPro"/>
</dbReference>
<dbReference type="CDD" id="cd07765">
    <property type="entry name" value="KRAB_A-box"/>
    <property type="match status" value="1"/>
</dbReference>
<dbReference type="FunFam" id="3.30.160.60:FF:000029">
    <property type="entry name" value="GLI family zinc finger 4"/>
    <property type="match status" value="2"/>
</dbReference>
<dbReference type="FunFam" id="3.30.160.60:FF:000508">
    <property type="entry name" value="Myeloid zinc finger 1"/>
    <property type="match status" value="1"/>
</dbReference>
<dbReference type="FunFam" id="3.30.160.60:FF:001073">
    <property type="entry name" value="zinc finger protein 182"/>
    <property type="match status" value="1"/>
</dbReference>
<dbReference type="FunFam" id="3.30.160.60:FF:000053">
    <property type="entry name" value="zinc finger protein 182 isoform X1"/>
    <property type="match status" value="1"/>
</dbReference>
<dbReference type="FunFam" id="3.30.160.60:FF:000824">
    <property type="entry name" value="Zinc finger protein 184"/>
    <property type="match status" value="2"/>
</dbReference>
<dbReference type="FunFam" id="3.30.160.60:FF:000295">
    <property type="entry name" value="zinc finger protein 19"/>
    <property type="match status" value="1"/>
</dbReference>
<dbReference type="FunFam" id="3.30.160.60:FF:000622">
    <property type="entry name" value="zinc finger protein 26 isoform X3"/>
    <property type="match status" value="1"/>
</dbReference>
<dbReference type="FunFam" id="3.30.160.60:FF:000128">
    <property type="entry name" value="zinc finger protein 268 isoform X1"/>
    <property type="match status" value="1"/>
</dbReference>
<dbReference type="FunFam" id="3.30.160.60:FF:002343">
    <property type="entry name" value="Zinc finger protein 33A"/>
    <property type="match status" value="2"/>
</dbReference>
<dbReference type="FunFam" id="3.30.160.60:FF:001498">
    <property type="entry name" value="Zinc finger protein 404"/>
    <property type="match status" value="1"/>
</dbReference>
<dbReference type="FunFam" id="3.30.160.60:FF:000953">
    <property type="entry name" value="Zinc finger protein 691"/>
    <property type="match status" value="1"/>
</dbReference>
<dbReference type="Gene3D" id="6.10.140.140">
    <property type="match status" value="1"/>
</dbReference>
<dbReference type="Gene3D" id="3.30.160.60">
    <property type="entry name" value="Classic Zinc Finger"/>
    <property type="match status" value="14"/>
</dbReference>
<dbReference type="InterPro" id="IPR001909">
    <property type="entry name" value="KRAB"/>
</dbReference>
<dbReference type="InterPro" id="IPR036051">
    <property type="entry name" value="KRAB_dom_sf"/>
</dbReference>
<dbReference type="InterPro" id="IPR036236">
    <property type="entry name" value="Znf_C2H2_sf"/>
</dbReference>
<dbReference type="InterPro" id="IPR013087">
    <property type="entry name" value="Znf_C2H2_type"/>
</dbReference>
<dbReference type="PANTHER" id="PTHR24399">
    <property type="entry name" value="ZINC FINGER AND BTB DOMAIN-CONTAINING"/>
    <property type="match status" value="1"/>
</dbReference>
<dbReference type="PANTHER" id="PTHR24399:SF49">
    <property type="entry name" value="ZINC FINGER PROTEIN 674"/>
    <property type="match status" value="1"/>
</dbReference>
<dbReference type="Pfam" id="PF01352">
    <property type="entry name" value="KRAB"/>
    <property type="match status" value="1"/>
</dbReference>
<dbReference type="Pfam" id="PF00096">
    <property type="entry name" value="zf-C2H2"/>
    <property type="match status" value="14"/>
</dbReference>
<dbReference type="SMART" id="SM00349">
    <property type="entry name" value="KRAB"/>
    <property type="match status" value="1"/>
</dbReference>
<dbReference type="SMART" id="SM00355">
    <property type="entry name" value="ZnF_C2H2"/>
    <property type="match status" value="14"/>
</dbReference>
<dbReference type="SUPFAM" id="SSF57667">
    <property type="entry name" value="beta-beta-alpha zinc fingers"/>
    <property type="match status" value="8"/>
</dbReference>
<dbReference type="SUPFAM" id="SSF109640">
    <property type="entry name" value="KRAB domain (Kruppel-associated box)"/>
    <property type="match status" value="1"/>
</dbReference>
<dbReference type="PROSITE" id="PS50805">
    <property type="entry name" value="KRAB"/>
    <property type="match status" value="1"/>
</dbReference>
<dbReference type="PROSITE" id="PS00028">
    <property type="entry name" value="ZINC_FINGER_C2H2_1"/>
    <property type="match status" value="14"/>
</dbReference>
<dbReference type="PROSITE" id="PS50157">
    <property type="entry name" value="ZINC_FINGER_C2H2_2"/>
    <property type="match status" value="14"/>
</dbReference>
<sequence length="627" mass="72439">MAKPQEPVTFEDVAVDFTQEEWQYLNSPQRTLYRDVMLETYSNLVSVCEVASIGSEDQGGISHLSSLEQQVTKPDLIIKLEVEEPDPEDGEIPVWSFPEVCQINEQFERQHQDKQDKYLLMQVRLPNDNIITKSGQNYTDFRNAFHLSTGLLVPMQRSHKFESFGNTMVDNLNLLTGSSTENKHDTGCAKFFFHTEYENPNFIVKPCGYKEYEKTLSQKKGLSLHQRIKNGERPFECTACQKTFSKKSHLIVHWRTHTGEKPFECSECGKAFSQKSQLIIHLRTHTGERPFACPECGKAFREKSTVIIHYRTHTGEKPYECNQCGKAFTQKSNLIVHQKTHTGEKTYECTKCGESFIQKLDLIIHHSTHTGKKPHECSECKKTFSDKSTLVIHQRTHTGEKPHKCTECGKSFNEKSTLIVHQRIHTGEKPYECDVCGKTFTQKSNLGVHQRTHSGEKPFECNECEKAFSQKSYLMLHQRGHTGEKPYECNECEKAFSQKSYLIIHQRTHTEEKPYKCNECGKAFREKSKLIIHQRIHTGEKPYECLVCWKAFSQKSQLIIHQRTHTGEKPYECTECGKAFREKSTFTVHQRTHTGEKPYKCIECGKAFTQKSNLIVHQRTHTVKKAH</sequence>
<reference key="1">
    <citation type="journal article" date="2005" name="Science">
        <title>The transcriptional landscape of the mammalian genome.</title>
        <authorList>
            <person name="Carninci P."/>
            <person name="Kasukawa T."/>
            <person name="Katayama S."/>
            <person name="Gough J."/>
            <person name="Frith M.C."/>
            <person name="Maeda N."/>
            <person name="Oyama R."/>
            <person name="Ravasi T."/>
            <person name="Lenhard B."/>
            <person name="Wells C."/>
            <person name="Kodzius R."/>
            <person name="Shimokawa K."/>
            <person name="Bajic V.B."/>
            <person name="Brenner S.E."/>
            <person name="Batalov S."/>
            <person name="Forrest A.R."/>
            <person name="Zavolan M."/>
            <person name="Davis M.J."/>
            <person name="Wilming L.G."/>
            <person name="Aidinis V."/>
            <person name="Allen J.E."/>
            <person name="Ambesi-Impiombato A."/>
            <person name="Apweiler R."/>
            <person name="Aturaliya R.N."/>
            <person name="Bailey T.L."/>
            <person name="Bansal M."/>
            <person name="Baxter L."/>
            <person name="Beisel K.W."/>
            <person name="Bersano T."/>
            <person name="Bono H."/>
            <person name="Chalk A.M."/>
            <person name="Chiu K.P."/>
            <person name="Choudhary V."/>
            <person name="Christoffels A."/>
            <person name="Clutterbuck D.R."/>
            <person name="Crowe M.L."/>
            <person name="Dalla E."/>
            <person name="Dalrymple B.P."/>
            <person name="de Bono B."/>
            <person name="Della Gatta G."/>
            <person name="di Bernardo D."/>
            <person name="Down T."/>
            <person name="Engstrom P."/>
            <person name="Fagiolini M."/>
            <person name="Faulkner G."/>
            <person name="Fletcher C.F."/>
            <person name="Fukushima T."/>
            <person name="Furuno M."/>
            <person name="Futaki S."/>
            <person name="Gariboldi M."/>
            <person name="Georgii-Hemming P."/>
            <person name="Gingeras T.R."/>
            <person name="Gojobori T."/>
            <person name="Green R.E."/>
            <person name="Gustincich S."/>
            <person name="Harbers M."/>
            <person name="Hayashi Y."/>
            <person name="Hensch T.K."/>
            <person name="Hirokawa N."/>
            <person name="Hill D."/>
            <person name="Huminiecki L."/>
            <person name="Iacono M."/>
            <person name="Ikeo K."/>
            <person name="Iwama A."/>
            <person name="Ishikawa T."/>
            <person name="Jakt M."/>
            <person name="Kanapin A."/>
            <person name="Katoh M."/>
            <person name="Kawasawa Y."/>
            <person name="Kelso J."/>
            <person name="Kitamura H."/>
            <person name="Kitano H."/>
            <person name="Kollias G."/>
            <person name="Krishnan S.P."/>
            <person name="Kruger A."/>
            <person name="Kummerfeld S.K."/>
            <person name="Kurochkin I.V."/>
            <person name="Lareau L.F."/>
            <person name="Lazarevic D."/>
            <person name="Lipovich L."/>
            <person name="Liu J."/>
            <person name="Liuni S."/>
            <person name="McWilliam S."/>
            <person name="Madan Babu M."/>
            <person name="Madera M."/>
            <person name="Marchionni L."/>
            <person name="Matsuda H."/>
            <person name="Matsuzawa S."/>
            <person name="Miki H."/>
            <person name="Mignone F."/>
            <person name="Miyake S."/>
            <person name="Morris K."/>
            <person name="Mottagui-Tabar S."/>
            <person name="Mulder N."/>
            <person name="Nakano N."/>
            <person name="Nakauchi H."/>
            <person name="Ng P."/>
            <person name="Nilsson R."/>
            <person name="Nishiguchi S."/>
            <person name="Nishikawa S."/>
            <person name="Nori F."/>
            <person name="Ohara O."/>
            <person name="Okazaki Y."/>
            <person name="Orlando V."/>
            <person name="Pang K.C."/>
            <person name="Pavan W.J."/>
            <person name="Pavesi G."/>
            <person name="Pesole G."/>
            <person name="Petrovsky N."/>
            <person name="Piazza S."/>
            <person name="Reed J."/>
            <person name="Reid J.F."/>
            <person name="Ring B.Z."/>
            <person name="Ringwald M."/>
            <person name="Rost B."/>
            <person name="Ruan Y."/>
            <person name="Salzberg S.L."/>
            <person name="Sandelin A."/>
            <person name="Schneider C."/>
            <person name="Schoenbach C."/>
            <person name="Sekiguchi K."/>
            <person name="Semple C.A."/>
            <person name="Seno S."/>
            <person name="Sessa L."/>
            <person name="Sheng Y."/>
            <person name="Shibata Y."/>
            <person name="Shimada H."/>
            <person name="Shimada K."/>
            <person name="Silva D."/>
            <person name="Sinclair B."/>
            <person name="Sperling S."/>
            <person name="Stupka E."/>
            <person name="Sugiura K."/>
            <person name="Sultana R."/>
            <person name="Takenaka Y."/>
            <person name="Taki K."/>
            <person name="Tammoja K."/>
            <person name="Tan S.L."/>
            <person name="Tang S."/>
            <person name="Taylor M.S."/>
            <person name="Tegner J."/>
            <person name="Teichmann S.A."/>
            <person name="Ueda H.R."/>
            <person name="van Nimwegen E."/>
            <person name="Verardo R."/>
            <person name="Wei C.L."/>
            <person name="Yagi K."/>
            <person name="Yamanishi H."/>
            <person name="Zabarovsky E."/>
            <person name="Zhu S."/>
            <person name="Zimmer A."/>
            <person name="Hide W."/>
            <person name="Bult C."/>
            <person name="Grimmond S.M."/>
            <person name="Teasdale R.D."/>
            <person name="Liu E.T."/>
            <person name="Brusic V."/>
            <person name="Quackenbush J."/>
            <person name="Wahlestedt C."/>
            <person name="Mattick J.S."/>
            <person name="Hume D.A."/>
            <person name="Kai C."/>
            <person name="Sasaki D."/>
            <person name="Tomaru Y."/>
            <person name="Fukuda S."/>
            <person name="Kanamori-Katayama M."/>
            <person name="Suzuki M."/>
            <person name="Aoki J."/>
            <person name="Arakawa T."/>
            <person name="Iida J."/>
            <person name="Imamura K."/>
            <person name="Itoh M."/>
            <person name="Kato T."/>
            <person name="Kawaji H."/>
            <person name="Kawagashira N."/>
            <person name="Kawashima T."/>
            <person name="Kojima M."/>
            <person name="Kondo S."/>
            <person name="Konno H."/>
            <person name="Nakano K."/>
            <person name="Ninomiya N."/>
            <person name="Nishio T."/>
            <person name="Okada M."/>
            <person name="Plessy C."/>
            <person name="Shibata K."/>
            <person name="Shiraki T."/>
            <person name="Suzuki S."/>
            <person name="Tagami M."/>
            <person name="Waki K."/>
            <person name="Watahiki A."/>
            <person name="Okamura-Oho Y."/>
            <person name="Suzuki H."/>
            <person name="Kawai J."/>
            <person name="Hayashizaki Y."/>
        </authorList>
    </citation>
    <scope>NUCLEOTIDE SEQUENCE [LARGE SCALE MRNA]</scope>
    <source>
        <strain>C57BL/6J</strain>
        <strain>NOD</strain>
        <tissue>B-cell</tissue>
        <tissue>Medulla oblongata</tissue>
    </source>
</reference>
<reference key="2">
    <citation type="journal article" date="2004" name="Genome Res.">
        <title>The status, quality, and expansion of the NIH full-length cDNA project: the Mammalian Gene Collection (MGC).</title>
        <authorList>
            <consortium name="The MGC Project Team"/>
        </authorList>
    </citation>
    <scope>NUCLEOTIDE SEQUENCE [LARGE SCALE MRNA]</scope>
    <source>
        <strain>C57BL/6J</strain>
        <tissue>Fetal brain</tissue>
    </source>
</reference>
<accession>Q6P560</accession>
<accession>Q3U2Y4</accession>
<accession>Q8CCU4</accession>
<gene>
    <name type="primary">Znf182</name>
    <name type="synonym">Zfp182</name>
    <name type="synonym">Znf21</name>
</gene>
<evidence type="ECO:0000255" key="1">
    <source>
        <dbReference type="PROSITE-ProRule" id="PRU00042"/>
    </source>
</evidence>
<evidence type="ECO:0000255" key="2">
    <source>
        <dbReference type="PROSITE-ProRule" id="PRU00119"/>
    </source>
</evidence>
<evidence type="ECO:0000305" key="3"/>
<organism>
    <name type="scientific">Mus musculus</name>
    <name type="common">Mouse</name>
    <dbReference type="NCBI Taxonomy" id="10090"/>
    <lineage>
        <taxon>Eukaryota</taxon>
        <taxon>Metazoa</taxon>
        <taxon>Chordata</taxon>
        <taxon>Craniata</taxon>
        <taxon>Vertebrata</taxon>
        <taxon>Euteleostomi</taxon>
        <taxon>Mammalia</taxon>
        <taxon>Eutheria</taxon>
        <taxon>Euarchontoglires</taxon>
        <taxon>Glires</taxon>
        <taxon>Rodentia</taxon>
        <taxon>Myomorpha</taxon>
        <taxon>Muroidea</taxon>
        <taxon>Muridae</taxon>
        <taxon>Murinae</taxon>
        <taxon>Mus</taxon>
        <taxon>Mus</taxon>
    </lineage>
</organism>
<feature type="chain" id="PRO_0000047346" description="Zinc finger protein 182">
    <location>
        <begin position="1"/>
        <end position="627"/>
    </location>
</feature>
<feature type="domain" description="KRAB" evidence="2">
    <location>
        <begin position="8"/>
        <end position="98"/>
    </location>
</feature>
<feature type="zinc finger region" description="C2H2-type 1" evidence="1">
    <location>
        <begin position="235"/>
        <end position="257"/>
    </location>
</feature>
<feature type="zinc finger region" description="C2H2-type 2" evidence="1">
    <location>
        <begin position="263"/>
        <end position="285"/>
    </location>
</feature>
<feature type="zinc finger region" description="C2H2-type 3" evidence="1">
    <location>
        <begin position="291"/>
        <end position="313"/>
    </location>
</feature>
<feature type="zinc finger region" description="C2H2-type 4" evidence="1">
    <location>
        <begin position="319"/>
        <end position="341"/>
    </location>
</feature>
<feature type="zinc finger region" description="C2H2-type 5" evidence="1">
    <location>
        <begin position="347"/>
        <end position="369"/>
    </location>
</feature>
<feature type="zinc finger region" description="C2H2-type 6" evidence="1">
    <location>
        <begin position="375"/>
        <end position="397"/>
    </location>
</feature>
<feature type="zinc finger region" description="C2H2-type 7" evidence="1">
    <location>
        <begin position="403"/>
        <end position="425"/>
    </location>
</feature>
<feature type="zinc finger region" description="C2H2-type 8" evidence="1">
    <location>
        <begin position="431"/>
        <end position="453"/>
    </location>
</feature>
<feature type="zinc finger region" description="C2H2-type 9" evidence="1">
    <location>
        <begin position="459"/>
        <end position="481"/>
    </location>
</feature>
<feature type="zinc finger region" description="C2H2-type 10" evidence="1">
    <location>
        <begin position="487"/>
        <end position="509"/>
    </location>
</feature>
<feature type="zinc finger region" description="C2H2-type 11" evidence="1">
    <location>
        <begin position="515"/>
        <end position="537"/>
    </location>
</feature>
<feature type="zinc finger region" description="C2H2-type 12" evidence="1">
    <location>
        <begin position="543"/>
        <end position="565"/>
    </location>
</feature>
<feature type="zinc finger region" description="C2H2-type 13" evidence="1">
    <location>
        <begin position="571"/>
        <end position="593"/>
    </location>
</feature>
<feature type="zinc finger region" description="C2H2-type 14" evidence="1">
    <location>
        <begin position="599"/>
        <end position="621"/>
    </location>
</feature>
<feature type="sequence conflict" description="In Ref. 1; BAE33006." evidence="3" ref="1">
    <original>S</original>
    <variation>R</variation>
    <location>
        <position position="217"/>
    </location>
</feature>
<feature type="sequence conflict" description="In Ref. 1; BAE33006." evidence="3" ref="1">
    <original>E</original>
    <variation>K</variation>
    <location>
        <position position="526"/>
    </location>
</feature>
<comment type="function">
    <text>May be involved in transcriptional regulation.</text>
</comment>
<comment type="subcellular location">
    <subcellularLocation>
        <location evidence="3">Nucleus</location>
    </subcellularLocation>
</comment>
<comment type="similarity">
    <text evidence="3">Belongs to the krueppel C2H2-type zinc-finger protein family.</text>
</comment>
<proteinExistence type="evidence at transcript level"/>
<name>ZN182_MOUSE</name>
<keyword id="KW-0238">DNA-binding</keyword>
<keyword id="KW-0479">Metal-binding</keyword>
<keyword id="KW-0539">Nucleus</keyword>
<keyword id="KW-1185">Reference proteome</keyword>
<keyword id="KW-0677">Repeat</keyword>
<keyword id="KW-0804">Transcription</keyword>
<keyword id="KW-0805">Transcription regulation</keyword>
<keyword id="KW-0862">Zinc</keyword>
<keyword id="KW-0863">Zinc-finger</keyword>
<protein>
    <recommendedName>
        <fullName>Zinc finger protein 182</fullName>
    </recommendedName>
    <alternativeName>
        <fullName>Zinc finger protein 21</fullName>
    </alternativeName>
</protein>